<comment type="function">
    <text evidence="1 3 4">Involved in polyamine metabolism. Catalyzes the deacetylation of various acetylated polyamines such as N-acetylputrescine, N-acetylcadaverine, N(1)-acetylspermine, N(1)-acetylspermidine and N(8)-acetylspermidine (PubMed:3207420, PubMed:8824626). In vitro, is also able to deacetylate L-Lys(epsilon-acetyl)coumarin, but has very low activity towards the larger tetrapeptide N-acetyl-L-Arg-L-His-L-Lys(epsilon-acetyl)-L-Lys(epsilon-acetyl)coumarin (PubMed:21268586).</text>
</comment>
<comment type="catalytic activity">
    <reaction evidence="3 4">
        <text>N-acetylputrescine + H2O = putrescine + acetate</text>
        <dbReference type="Rhea" id="RHEA:23412"/>
        <dbReference type="ChEBI" id="CHEBI:15377"/>
        <dbReference type="ChEBI" id="CHEBI:30089"/>
        <dbReference type="ChEBI" id="CHEBI:58263"/>
        <dbReference type="ChEBI" id="CHEBI:326268"/>
        <dbReference type="EC" id="3.5.1.62"/>
    </reaction>
</comment>
<comment type="catalytic activity">
    <reaction evidence="3 4">
        <text>N-acetylcadaverine + H2O = cadaverine + acetate</text>
        <dbReference type="Rhea" id="RHEA:51892"/>
        <dbReference type="ChEBI" id="CHEBI:15377"/>
        <dbReference type="ChEBI" id="CHEBI:30089"/>
        <dbReference type="ChEBI" id="CHEBI:58384"/>
        <dbReference type="ChEBI" id="CHEBI:134408"/>
    </reaction>
</comment>
<comment type="catalytic activity">
    <reaction evidence="3 4">
        <text>N(1)-acetylspermine + H2O = spermine + acetate</text>
        <dbReference type="Rhea" id="RHEA:51896"/>
        <dbReference type="ChEBI" id="CHEBI:15377"/>
        <dbReference type="ChEBI" id="CHEBI:30089"/>
        <dbReference type="ChEBI" id="CHEBI:45725"/>
        <dbReference type="ChEBI" id="CHEBI:58101"/>
    </reaction>
</comment>
<comment type="catalytic activity">
    <reaction evidence="3 4">
        <text>N(1)-acetylspermidine + H2O = spermidine + acetate</text>
        <dbReference type="Rhea" id="RHEA:51900"/>
        <dbReference type="ChEBI" id="CHEBI:15377"/>
        <dbReference type="ChEBI" id="CHEBI:30089"/>
        <dbReference type="ChEBI" id="CHEBI:57834"/>
        <dbReference type="ChEBI" id="CHEBI:58324"/>
    </reaction>
</comment>
<comment type="catalytic activity">
    <reaction evidence="3 4">
        <text>N(8)-acetylspermidine + H2O = spermidine + acetate</text>
        <dbReference type="Rhea" id="RHEA:23928"/>
        <dbReference type="ChEBI" id="CHEBI:15377"/>
        <dbReference type="ChEBI" id="CHEBI:30089"/>
        <dbReference type="ChEBI" id="CHEBI:57834"/>
        <dbReference type="ChEBI" id="CHEBI:58535"/>
        <dbReference type="EC" id="3.5.1.48"/>
    </reaction>
</comment>
<comment type="cofactor">
    <cofactor evidence="1 4 11">
        <name>Zn(2+)</name>
        <dbReference type="ChEBI" id="CHEBI:29105"/>
    </cofactor>
    <text evidence="1 2 3 4">Binds 1 zinc ion per subunit.</text>
</comment>
<comment type="activity regulation">
    <text evidence="1 2 3 4">Zinc ions inhibit enzyme activity in a dose-dependent manner (PubMed:8824626). Inhibited by KCl at concentrations above 10 mM (PubMed:21268586). Inhibited by o-oxyquinoline in vitro, suggesting that it is a metalloprotein (PubMed:3207420). Inhibited by various substrate N(8)-acetylspermidine analogs bearing different metal-binding groups such as trifluoromethylketone, thiol, or hydroxamate, and by hydroxamate analogs of short-chain acetyldiamines (PubMed:26200446).</text>
</comment>
<comment type="biophysicochemical properties">
    <kinetics>
        <KM evidence="4">50 uM for N-acetylcadaverine</KM>
        <KM evidence="4">220 uM for N-acetylputrescine</KM>
        <KM evidence="4">130 uM for N(1)-acetylspermidine</KM>
        <KM evidence="4">310 uM for N(8)-acetylspermidine</KM>
        <KM evidence="4">290 uM for N(1)-acetylspermine</KM>
        <Vmax evidence="4">27.0 umol/min/mg enzyme with N-acetylcadaverine as substrate</Vmax>
        <Vmax evidence="4">27.0 umol/min/mg enzyme with N-acetylputrescine as substrate</Vmax>
        <Vmax evidence="4">16.5 umol/min/mg enzyme with N(1)-acetylspermidine as substrate</Vmax>
        <Vmax evidence="4">17.2 umol/min/mg enzyme with N(8)-acetylspermidine as substrate</Vmax>
        <Vmax evidence="4">13.4 umol/min/mg enzyme with N(1)-acetylspermine as substrate</Vmax>
    </kinetics>
    <phDependence>
        <text evidence="3">Optimum pH is 9 with acetylputrescine, N(1)-acetylspermidine, and N(8)-acetylspermidine as substrates, and is 8 with acetylcadaverine as substrate.</text>
    </phDependence>
</comment>
<comment type="pathway">
    <text evidence="12">Amine and polyamine metabolism.</text>
</comment>
<comment type="subunit">
    <text evidence="1 3">Homodimer.</text>
</comment>
<comment type="similarity">
    <text evidence="8">Belongs to the histone deacetylase family.</text>
</comment>
<sequence length="341" mass="36332">MRVIFSEDHKLRNAKTELYGGELVPPFEAPFRAEWILAAVKEAGFDDVVAPARHGLETVLKVHDAGYLNFLETAWDRWKAAGYKGEAIATSFPVRRTSPRIPTDIEGQIGYYCNAAETAISPGTWEAALSSMASAIDGADLIAAGHKAAFSLCRPPGHHAGIDMFGGYCFINNAAVAAQRLLDKGAKKIAILDVDFHHGNGTQDIFYERGDVFFASLHGDPAEAFPHFLGYAEETGKGAGAGTTANYPMGRGTPYSVWGEALTDSLKRIAAFGAEAIVVSLGVDTFEQDPISFFKLTSPDYITMGRTIAASGVPLLVVMEGGYGVPEIGLNVANVLKGVAG</sequence>
<gene>
    <name evidence="7" type="primary">aphA</name>
    <name type="synonym">aph</name>
</gene>
<name>APAH_MYCRA</name>
<reference key="1">
    <citation type="journal article" date="1996" name="J. Bacteriol.">
        <title>Acetylpolyamine amidohydrolase from Mycoplana ramosa: gene cloning and characterization of the metal-substituted enzyme.</title>
        <authorList>
            <person name="Sakurada K."/>
            <person name="Ohta T."/>
            <person name="Fujishiro K."/>
            <person name="Hasegawa M."/>
            <person name="Aisaka K."/>
        </authorList>
    </citation>
    <scope>NUCLEOTIDE SEQUENCE [GENOMIC DNA]</scope>
    <scope>PROTEIN SEQUENCE OF 1-30</scope>
    <scope>FUNCTION</scope>
    <scope>CATALYTIC ACTIVITY</scope>
    <scope>SUBSTRATE SPECIFICITY</scope>
    <scope>BIOPHYSICOCHEMICAL PROPERTIES</scope>
    <scope>COFACTOR</scope>
    <scope>ACTIVITY REGULATION</scope>
    <scope>PATHWAY</scope>
    <source>
        <strain>ATCC 49678 / DSM 7292 / JCM 7822 / NBRC 15249 / NCIMB 9440 / FERM BP-1845</strain>
    </source>
</reference>
<reference key="2">
    <citation type="journal article" date="1988" name="Biochem. Biophys. Res. Commun.">
        <title>Crystallization and some properties of acetylpolyamine amidohydrolase from Mycoplana bullata.</title>
        <authorList>
            <person name="Fujishiro K."/>
            <person name="Ando M."/>
            <person name="Uwajima T."/>
        </authorList>
    </citation>
    <scope>FUNCTION</scope>
    <scope>CATALYTIC ACTIVITY</scope>
    <scope>SUBSTRATE SPECIFICITY</scope>
    <scope>COFACTOR</scope>
    <scope>SUBUNIT</scope>
    <scope>ACTIVITY REGULATION</scope>
    <scope>BIOPHYSICOCHEMICAL PROPERTIES</scope>
    <source>
        <strain>ATCC 49678 / DSM 7292 / JCM 7822 / NBRC 15249 / NCIMB 9440 / FERM BP-1845</strain>
    </source>
</reference>
<reference key="3">
    <citation type="journal article" date="2011" name="Biochemistry">
        <title>Structure of prokaryotic polyamine deacetylase reveals evolutionary functional relationships with eukaryotic histone deacetylases.</title>
        <authorList>
            <person name="Lombardi P.M."/>
            <person name="Angell H.D."/>
            <person name="Whittington D.A."/>
            <person name="Flynn E.F."/>
            <person name="Rajashankar K.R."/>
            <person name="Christianson D.W."/>
        </authorList>
    </citation>
    <scope>X-RAY CRYSTALLOGRAPHY (2.25 ANGSTROMS) OF WILD-TYPE AND MUTANT ALA-59 IN COMPLEXES WITH ZINC; N8-ACETYLSPERMIDINE AND ACETYLSPERMINE SUBSTRATES; A TRANSITION STATE ANALOG AND A HYDROXAMATE INHIBITOR</scope>
    <scope>FUNCTION</scope>
    <scope>SUBUNIT</scope>
    <scope>COFACTOR</scope>
    <scope>ACTIVITY REGULATION</scope>
    <scope>ACTIVE SITE</scope>
    <scope>MUTAGENESIS OF HIS-158; HIS-159 AND TYR-323</scope>
    <source>
        <strain>ATCC 49678 / DSM 7292 / JCM 7822 / NBRC 15249 / NCIMB 9440 / FERM BP-1845</strain>
    </source>
</reference>
<reference key="4">
    <citation type="journal article" date="2015" name="Biochemistry">
        <title>Design, synthesis, and evaluation of polyamine deacetylase inhibitors, and high-resolution crystal structures of their complexes with acetylpolyamine amidohydrolase.</title>
        <authorList>
            <person name="Decroos C."/>
            <person name="Christianson D.W."/>
        </authorList>
    </citation>
    <scope>X-RAY CRYSTALLOGRAPHY (1.13 ANGSTROMS) IN COMPLEXES WITH ZINC IONS AND SEVERAL SUBSTRATE ANALOG INHIBITORS</scope>
    <scope>ACTIVITY REGULATION</scope>
    <scope>COFACTOR</scope>
    <scope>REACTION MECHANISM</scope>
    <scope>ACTIVE SITE</scope>
</reference>
<organism>
    <name type="scientific">Mycoplana ramosa</name>
    <name type="common">Mycoplana bullata</name>
    <dbReference type="NCBI Taxonomy" id="40837"/>
    <lineage>
        <taxon>Bacteria</taxon>
        <taxon>Pseudomonadati</taxon>
        <taxon>Pseudomonadota</taxon>
        <taxon>Alphaproteobacteria</taxon>
        <taxon>Hyphomicrobiales</taxon>
        <taxon>Rhizobiaceae</taxon>
        <taxon>Mycoplana</taxon>
    </lineage>
</organism>
<proteinExistence type="evidence at protein level"/>
<protein>
    <recommendedName>
        <fullName evidence="6 7">Acetylpolyamine amidohydrolase</fullName>
        <shortName evidence="5">APAH</shortName>
        <ecNumber evidence="3 4">3.5.1.-</ecNumber>
    </recommendedName>
    <alternativeName>
        <fullName evidence="11">Acetylcadaverine deacetylase</fullName>
    </alternativeName>
    <alternativeName>
        <fullName evidence="8">Acetylpolyamine deacetylase</fullName>
    </alternativeName>
    <alternativeName>
        <fullName evidence="11">Acetylputrescine deacetylase</fullName>
        <ecNumber evidence="3 4">3.5.1.62</ecNumber>
    </alternativeName>
    <alternativeName>
        <fullName evidence="11">Acetylspermidine deacetylase</fullName>
        <ecNumber evidence="3 4">3.5.1.48</ecNumber>
    </alternativeName>
</protein>
<keyword id="KW-0002">3D-structure</keyword>
<keyword id="KW-0903">Direct protein sequencing</keyword>
<keyword id="KW-0378">Hydrolase</keyword>
<keyword id="KW-0479">Metal-binding</keyword>
<keyword id="KW-0862">Zinc</keyword>
<dbReference type="EC" id="3.5.1.-" evidence="3 4"/>
<dbReference type="EC" id="3.5.1.62" evidence="3 4"/>
<dbReference type="EC" id="3.5.1.48" evidence="3 4"/>
<dbReference type="EMBL" id="D10463">
    <property type="protein sequence ID" value="BAA01256.1"/>
    <property type="molecule type" value="Genomic_DNA"/>
</dbReference>
<dbReference type="PIR" id="T48858">
    <property type="entry name" value="T48858"/>
</dbReference>
<dbReference type="RefSeq" id="WP_374840946.1">
    <property type="nucleotide sequence ID" value="NZ_JBHEEW010000017.1"/>
</dbReference>
<dbReference type="PDB" id="3Q9B">
    <property type="method" value="X-ray"/>
    <property type="resolution" value="2.25 A"/>
    <property type="chains" value="A/B/C/D/E/F/G/H/I/J/K/L=1-341"/>
</dbReference>
<dbReference type="PDB" id="3Q9C">
    <property type="method" value="X-ray"/>
    <property type="resolution" value="2.30 A"/>
    <property type="chains" value="A/B/C/D/E/F/G/H/I/J/K/L=1-341"/>
</dbReference>
<dbReference type="PDB" id="3Q9E">
    <property type="method" value="X-ray"/>
    <property type="resolution" value="2.50 A"/>
    <property type="chains" value="A/B/C/D/E/F/G/H/I/J/K/L=1-341"/>
</dbReference>
<dbReference type="PDB" id="3Q9F">
    <property type="method" value="X-ray"/>
    <property type="resolution" value="2.35 A"/>
    <property type="chains" value="A/B/C/D/E/F/G/H/I/J/K/L=1-341"/>
</dbReference>
<dbReference type="PDB" id="4ZUM">
    <property type="method" value="X-ray"/>
    <property type="resolution" value="1.42 A"/>
    <property type="chains" value="A/B=1-341"/>
</dbReference>
<dbReference type="PDB" id="4ZUN">
    <property type="method" value="X-ray"/>
    <property type="resolution" value="1.40 A"/>
    <property type="chains" value="A/B=1-341"/>
</dbReference>
<dbReference type="PDB" id="4ZUO">
    <property type="method" value="X-ray"/>
    <property type="resolution" value="1.33 A"/>
    <property type="chains" value="A/B=1-341"/>
</dbReference>
<dbReference type="PDB" id="4ZUP">
    <property type="method" value="X-ray"/>
    <property type="resolution" value="1.42 A"/>
    <property type="chains" value="A/B=1-341"/>
</dbReference>
<dbReference type="PDB" id="4ZUQ">
    <property type="method" value="X-ray"/>
    <property type="resolution" value="1.22 A"/>
    <property type="chains" value="A/B=1-341"/>
</dbReference>
<dbReference type="PDB" id="4ZUR">
    <property type="method" value="X-ray"/>
    <property type="resolution" value="1.13 A"/>
    <property type="chains" value="A/B=1-341"/>
</dbReference>
<dbReference type="PDBsum" id="3Q9B"/>
<dbReference type="PDBsum" id="3Q9C"/>
<dbReference type="PDBsum" id="3Q9E"/>
<dbReference type="PDBsum" id="3Q9F"/>
<dbReference type="PDBsum" id="4ZUM"/>
<dbReference type="PDBsum" id="4ZUN"/>
<dbReference type="PDBsum" id="4ZUO"/>
<dbReference type="PDBsum" id="4ZUP"/>
<dbReference type="PDBsum" id="4ZUQ"/>
<dbReference type="PDBsum" id="4ZUR"/>
<dbReference type="SMR" id="Q48935"/>
<dbReference type="BindingDB" id="Q48935"/>
<dbReference type="ChEMBL" id="CHEMBL1795187"/>
<dbReference type="BioCyc" id="MetaCyc:MONOMER-14060"/>
<dbReference type="BRENDA" id="3.5.1.62">
    <property type="organism ID" value="14256"/>
</dbReference>
<dbReference type="EvolutionaryTrace" id="Q48935"/>
<dbReference type="GO" id="GO:0047609">
    <property type="term" value="F:acetylputrescine deacetylase activity"/>
    <property type="evidence" value="ECO:0007669"/>
    <property type="project" value="UniProtKB-EC"/>
</dbReference>
<dbReference type="GO" id="GO:0047611">
    <property type="term" value="F:acetylspermidine deacetylase activity"/>
    <property type="evidence" value="ECO:0007669"/>
    <property type="project" value="UniProtKB-EC"/>
</dbReference>
<dbReference type="GO" id="GO:0004407">
    <property type="term" value="F:histone deacetylase activity"/>
    <property type="evidence" value="ECO:0007669"/>
    <property type="project" value="TreeGrafter"/>
</dbReference>
<dbReference type="GO" id="GO:0046872">
    <property type="term" value="F:metal ion binding"/>
    <property type="evidence" value="ECO:0007669"/>
    <property type="project" value="UniProtKB-KW"/>
</dbReference>
<dbReference type="GO" id="GO:0040029">
    <property type="term" value="P:epigenetic regulation of gene expression"/>
    <property type="evidence" value="ECO:0007669"/>
    <property type="project" value="TreeGrafter"/>
</dbReference>
<dbReference type="CDD" id="cd10001">
    <property type="entry name" value="HDAC_classII_APAH"/>
    <property type="match status" value="1"/>
</dbReference>
<dbReference type="Gene3D" id="3.40.800.20">
    <property type="entry name" value="Histone deacetylase domain"/>
    <property type="match status" value="1"/>
</dbReference>
<dbReference type="InterPro" id="IPR050284">
    <property type="entry name" value="HDAC_PDAC"/>
</dbReference>
<dbReference type="InterPro" id="IPR000286">
    <property type="entry name" value="His_deacetylse"/>
</dbReference>
<dbReference type="InterPro" id="IPR023801">
    <property type="entry name" value="His_deacetylse_dom"/>
</dbReference>
<dbReference type="InterPro" id="IPR037138">
    <property type="entry name" value="His_deacetylse_dom_sf"/>
</dbReference>
<dbReference type="InterPro" id="IPR023696">
    <property type="entry name" value="Ureohydrolase_dom_sf"/>
</dbReference>
<dbReference type="PANTHER" id="PTHR10625:SF17">
    <property type="entry name" value="HISTONE DEACETYLASE 8"/>
    <property type="match status" value="1"/>
</dbReference>
<dbReference type="PANTHER" id="PTHR10625">
    <property type="entry name" value="HISTONE DEACETYLASE HDAC1-RELATED"/>
    <property type="match status" value="1"/>
</dbReference>
<dbReference type="Pfam" id="PF00850">
    <property type="entry name" value="Hist_deacetyl"/>
    <property type="match status" value="1"/>
</dbReference>
<dbReference type="PRINTS" id="PR01270">
    <property type="entry name" value="HDASUPER"/>
</dbReference>
<dbReference type="SUPFAM" id="SSF52768">
    <property type="entry name" value="Arginase/deacetylase"/>
    <property type="match status" value="1"/>
</dbReference>
<accession>Q48935</accession>
<evidence type="ECO:0000269" key="1">
    <source>
    </source>
</evidence>
<evidence type="ECO:0000269" key="2">
    <source>
    </source>
</evidence>
<evidence type="ECO:0000269" key="3">
    <source>
    </source>
</evidence>
<evidence type="ECO:0000269" key="4">
    <source>
    </source>
</evidence>
<evidence type="ECO:0000303" key="5">
    <source>
    </source>
</evidence>
<evidence type="ECO:0000303" key="6">
    <source>
    </source>
</evidence>
<evidence type="ECO:0000303" key="7">
    <source>
    </source>
</evidence>
<evidence type="ECO:0000305" key="8"/>
<evidence type="ECO:0000305" key="9">
    <source>
    </source>
</evidence>
<evidence type="ECO:0000305" key="10">
    <source>
    </source>
</evidence>
<evidence type="ECO:0000305" key="11">
    <source>
    </source>
</evidence>
<evidence type="ECO:0000305" key="12">
    <source>
    </source>
</evidence>
<evidence type="ECO:0007744" key="13">
    <source>
        <dbReference type="PDB" id="3Q9B"/>
    </source>
</evidence>
<evidence type="ECO:0007744" key="14">
    <source>
        <dbReference type="PDB" id="3Q9C"/>
    </source>
</evidence>
<evidence type="ECO:0007744" key="15">
    <source>
        <dbReference type="PDB" id="3Q9E"/>
    </source>
</evidence>
<evidence type="ECO:0007829" key="16">
    <source>
        <dbReference type="PDB" id="3Q9C"/>
    </source>
</evidence>
<evidence type="ECO:0007829" key="17">
    <source>
        <dbReference type="PDB" id="4ZUQ"/>
    </source>
</evidence>
<evidence type="ECO:0007829" key="18">
    <source>
        <dbReference type="PDB" id="4ZUR"/>
    </source>
</evidence>
<feature type="chain" id="PRO_0000114737" description="Acetylpolyamine amidohydrolase">
    <location>
        <begin position="1"/>
        <end position="341"/>
    </location>
</feature>
<feature type="active site" description="Proton donor/acceptor" evidence="9 10">
    <location>
        <position position="159"/>
    </location>
</feature>
<feature type="binding site" evidence="1 15">
    <location>
        <position position="19"/>
    </location>
    <ligand>
        <name>substrate</name>
    </ligand>
</feature>
<feature type="binding site" evidence="1 14">
    <location>
        <position position="106"/>
    </location>
    <ligand>
        <name>substrate</name>
    </ligand>
</feature>
<feature type="binding site" evidence="1 15">
    <location>
        <position position="117"/>
    </location>
    <ligand>
        <name>substrate</name>
    </ligand>
</feature>
<feature type="binding site" evidence="1 2 13 15">
    <location>
        <position position="195"/>
    </location>
    <ligand>
        <name>Zn(2+)</name>
        <dbReference type="ChEBI" id="CHEBI:29105"/>
    </ligand>
</feature>
<feature type="binding site" evidence="1 2 13 15">
    <location>
        <position position="197"/>
    </location>
    <ligand>
        <name>Zn(2+)</name>
        <dbReference type="ChEBI" id="CHEBI:29105"/>
    </ligand>
</feature>
<feature type="binding site" evidence="1 2 13 15">
    <location>
        <position position="284"/>
    </location>
    <ligand>
        <name>Zn(2+)</name>
        <dbReference type="ChEBI" id="CHEBI:29105"/>
    </ligand>
</feature>
<feature type="binding site" evidence="1 15">
    <location>
        <position position="323"/>
    </location>
    <ligand>
        <name>substrate</name>
    </ligand>
</feature>
<feature type="site" description="Polarizes the scissile carbonyl of the substrate" evidence="9">
    <location>
        <position position="323"/>
    </location>
</feature>
<feature type="mutagenesis site" description="Reduces enzyme activity by 97%." evidence="1">
    <original>H</original>
    <variation>A</variation>
    <location>
        <position position="158"/>
    </location>
</feature>
<feature type="mutagenesis site" description="Abolishes enzyme activity.">
    <original>H</original>
    <variation>A</variation>
    <location>
        <position position="159"/>
    </location>
</feature>
<feature type="mutagenesis site" description="Reduces enzyme activity by 99%." evidence="1">
    <original>Y</original>
    <variation>F</variation>
    <location>
        <position position="323"/>
    </location>
</feature>
<feature type="strand" evidence="18">
    <location>
        <begin position="2"/>
        <end position="4"/>
    </location>
</feature>
<feature type="helix" evidence="18">
    <location>
        <begin position="7"/>
        <end position="11"/>
    </location>
</feature>
<feature type="strand" evidence="18">
    <location>
        <begin position="17"/>
        <end position="19"/>
    </location>
</feature>
<feature type="strand" evidence="18">
    <location>
        <begin position="22"/>
        <end position="24"/>
    </location>
</feature>
<feature type="helix" evidence="18">
    <location>
        <begin position="31"/>
        <end position="42"/>
    </location>
</feature>
<feature type="strand" evidence="18">
    <location>
        <begin position="47"/>
        <end position="49"/>
    </location>
</feature>
<feature type="helix" evidence="18">
    <location>
        <begin position="59"/>
        <end position="61"/>
    </location>
</feature>
<feature type="helix" evidence="18">
    <location>
        <begin position="65"/>
        <end position="80"/>
    </location>
</feature>
<feature type="helix" evidence="18">
    <location>
        <begin position="105"/>
        <end position="111"/>
    </location>
</feature>
<feature type="strand" evidence="18">
    <location>
        <begin position="113"/>
        <end position="115"/>
    </location>
</feature>
<feature type="helix" evidence="18">
    <location>
        <begin position="124"/>
        <end position="143"/>
    </location>
</feature>
<feature type="strand" evidence="18">
    <location>
        <begin position="147"/>
        <end position="151"/>
    </location>
</feature>
<feature type="strand" evidence="18">
    <location>
        <begin position="164"/>
        <end position="166"/>
    </location>
</feature>
<feature type="strand" evidence="18">
    <location>
        <begin position="169"/>
        <end position="171"/>
    </location>
</feature>
<feature type="helix" evidence="18">
    <location>
        <begin position="173"/>
        <end position="183"/>
    </location>
</feature>
<feature type="strand" evidence="18">
    <location>
        <begin position="189"/>
        <end position="193"/>
    </location>
</feature>
<feature type="strand" evidence="18">
    <location>
        <begin position="195"/>
        <end position="197"/>
    </location>
</feature>
<feature type="helix" evidence="18">
    <location>
        <begin position="200"/>
        <end position="206"/>
    </location>
</feature>
<feature type="strand" evidence="18">
    <location>
        <begin position="210"/>
        <end position="219"/>
    </location>
</feature>
<feature type="helix" evidence="17">
    <location>
        <begin position="221"/>
        <end position="223"/>
    </location>
</feature>
<feature type="helix" evidence="18">
    <location>
        <begin position="238"/>
        <end position="240"/>
    </location>
</feature>
<feature type="strand" evidence="18">
    <location>
        <begin position="244"/>
        <end position="249"/>
    </location>
</feature>
<feature type="helix" evidence="18">
    <location>
        <begin position="255"/>
        <end position="272"/>
    </location>
</feature>
<feature type="strand" evidence="18">
    <location>
        <begin position="275"/>
        <end position="281"/>
    </location>
</feature>
<feature type="strand" evidence="16">
    <location>
        <begin position="294"/>
        <end position="296"/>
    </location>
</feature>
<feature type="helix" evidence="18">
    <location>
        <begin position="298"/>
        <end position="309"/>
    </location>
</feature>
<feature type="strand" evidence="18">
    <location>
        <begin position="315"/>
        <end position="319"/>
    </location>
</feature>
<feature type="helix" evidence="18">
    <location>
        <begin position="327"/>
        <end position="340"/>
    </location>
</feature>